<feature type="chain" id="PRO_0000378005" description="Uncharacterized protein 136R">
    <location>
        <begin position="1"/>
        <end position="178"/>
    </location>
</feature>
<accession>O55742</accession>
<protein>
    <recommendedName>
        <fullName>Uncharacterized protein 136R</fullName>
    </recommendedName>
</protein>
<organism>
    <name type="scientific">Invertebrate iridescent virus 6</name>
    <name type="common">IIV-6</name>
    <name type="synonym">Chilo iridescent virus</name>
    <dbReference type="NCBI Taxonomy" id="176652"/>
    <lineage>
        <taxon>Viruses</taxon>
        <taxon>Varidnaviria</taxon>
        <taxon>Bamfordvirae</taxon>
        <taxon>Nucleocytoviricota</taxon>
        <taxon>Megaviricetes</taxon>
        <taxon>Pimascovirales</taxon>
        <taxon>Iridoviridae</taxon>
        <taxon>Betairidovirinae</taxon>
        <taxon>Iridovirus</taxon>
    </lineage>
</organism>
<gene>
    <name type="ORF">IIV6-136R</name>
</gene>
<name>VF136_IIV6</name>
<organismHost>
    <name type="scientific">Acheta domesticus</name>
    <name type="common">House cricket</name>
    <dbReference type="NCBI Taxonomy" id="6997"/>
</organismHost>
<organismHost>
    <name type="scientific">Chilo suppressalis</name>
    <name type="common">Asiatic rice borer moth</name>
    <dbReference type="NCBI Taxonomy" id="168631"/>
</organismHost>
<organismHost>
    <name type="scientific">Gryllus bimaculatus</name>
    <name type="common">Two-spotted cricket</name>
    <dbReference type="NCBI Taxonomy" id="6999"/>
</organismHost>
<organismHost>
    <name type="scientific">Gryllus campestris</name>
    <dbReference type="NCBI Taxonomy" id="58607"/>
</organismHost>
<organismHost>
    <name type="scientific">Spodoptera frugiperda</name>
    <name type="common">Fall armyworm</name>
    <dbReference type="NCBI Taxonomy" id="7108"/>
</organismHost>
<proteinExistence type="inferred from homology"/>
<keyword id="KW-1185">Reference proteome</keyword>
<reference key="1">
    <citation type="journal article" date="2001" name="Virology">
        <title>Analysis of the first complete DNA sequence of an invertebrate iridovirus: coding strategy of the genome of Chilo iridescent virus.</title>
        <authorList>
            <person name="Jakob N.J."/>
            <person name="Mueller K."/>
            <person name="Bahr U."/>
            <person name="Darai G."/>
        </authorList>
    </citation>
    <scope>NUCLEOTIDE SEQUENCE [LARGE SCALE GENOMIC DNA]</scope>
</reference>
<reference key="2">
    <citation type="journal article" date="2007" name="Virol. J.">
        <title>Comparative genomic analysis of the family Iridoviridae: re-annotating and defining the core set of iridovirus genes.</title>
        <authorList>
            <person name="Eaton H.E."/>
            <person name="Metcalf J."/>
            <person name="Penny E."/>
            <person name="Tcherepanov V."/>
            <person name="Upton C."/>
            <person name="Brunetti C.R."/>
        </authorList>
    </citation>
    <scope>GENOME REANNOTATION</scope>
</reference>
<sequence>MIEDAIIVSTLASAALYLIYKTTKKQKVNNQQFIIERWTPETVQESPQSRYIIGNLKQRLQMLFPPPHMTRKKFTGILSMLNNRNIMAEIKLQEGPKSFTINKKQIFLCIKDKKSGDANYYDYNSLIFVTLHEIAHVLCDELGHTQKFQHIFKELLDHASSLGLYDETKPFVKNYCPS</sequence>
<comment type="similarity">
    <text evidence="1">Belongs to the IIV-6 136R family.</text>
</comment>
<evidence type="ECO:0000305" key="1"/>
<dbReference type="EMBL" id="AF303741">
    <property type="protein sequence ID" value="AAB94453.1"/>
    <property type="molecule type" value="Genomic_DNA"/>
</dbReference>
<dbReference type="PIR" id="T03079">
    <property type="entry name" value="T03079"/>
</dbReference>
<dbReference type="RefSeq" id="NP_149599.1">
    <property type="nucleotide sequence ID" value="NC_003038.1"/>
</dbReference>
<dbReference type="KEGG" id="vg:1733346"/>
<dbReference type="OrthoDB" id="18386at10239"/>
<dbReference type="Proteomes" id="UP000001359">
    <property type="component" value="Genome"/>
</dbReference>